<name>EMC6_DANRE</name>
<comment type="function">
    <text evidence="1">Part of the endoplasmic reticulum membrane protein complex (EMC) that enables the energy-independent insertion into endoplasmic reticulum membranes of newly synthesized membrane proteins. Preferentially accommodates proteins with transmembrane domains that are weakly hydrophobic or contain destabilizing features such as charged and aromatic residues. Involved in the cotranslational insertion of multi-pass membrane proteins in which stop-transfer membrane-anchor sequences become ER membrane spanning helices. It is also required for the post-translational insertion of tail-anchored/TA proteins in endoplasmic reticulum membranes. By mediating the proper cotranslational insertion of N-terminal transmembrane domains in an N-exo topology, with translocated N-terminus in the lumen of the ER, controls the topology of multi-pass membrane proteins like the G protein-coupled receptors. By regulating the insertion of various proteins in membranes, it is indirectly involved in many cellular processes.</text>
</comment>
<comment type="subunit">
    <text evidence="1">Component of the ER membrane protein complex (EMC).</text>
</comment>
<comment type="subcellular location">
    <subcellularLocation>
        <location evidence="1">Endoplasmic reticulum membrane</location>
        <topology evidence="1">Multi-pass membrane protein</topology>
    </subcellularLocation>
</comment>
<comment type="similarity">
    <text evidence="2">Belongs to the EMC6 family.</text>
</comment>
<evidence type="ECO:0000250" key="1">
    <source>
        <dbReference type="UniProtKB" id="Q9BV81"/>
    </source>
</evidence>
<evidence type="ECO:0000305" key="2"/>
<dbReference type="EMBL" id="BC046024">
    <property type="protein sequence ID" value="AAH46024.1"/>
    <property type="molecule type" value="mRNA"/>
</dbReference>
<dbReference type="EMBL" id="BC065646">
    <property type="protein sequence ID" value="AAH65646.1"/>
    <property type="molecule type" value="mRNA"/>
</dbReference>
<dbReference type="RefSeq" id="NP_956350.2">
    <property type="nucleotide sequence ID" value="NM_200056.2"/>
</dbReference>
<dbReference type="SMR" id="Q6P0F0"/>
<dbReference type="FunCoup" id="Q6P0F0">
    <property type="interactions" value="2345"/>
</dbReference>
<dbReference type="STRING" id="7955.ENSDARP00000051134"/>
<dbReference type="PaxDb" id="7955-ENSDARP00000051134"/>
<dbReference type="Ensembl" id="ENSDART00000051135">
    <property type="protein sequence ID" value="ENSDARP00000051134"/>
    <property type="gene ID" value="ENSDARG00000035282"/>
</dbReference>
<dbReference type="GeneID" id="337220"/>
<dbReference type="KEGG" id="dre:337220"/>
<dbReference type="AGR" id="ZFIN:ZDB-GENE-030131-9164"/>
<dbReference type="CTD" id="83460"/>
<dbReference type="ZFIN" id="ZDB-GENE-030131-9164">
    <property type="gene designation" value="emc6"/>
</dbReference>
<dbReference type="eggNOG" id="KOG4455">
    <property type="taxonomic scope" value="Eukaryota"/>
</dbReference>
<dbReference type="HOGENOM" id="CLU_110781_3_0_1"/>
<dbReference type="InParanoid" id="Q6P0F0"/>
<dbReference type="OMA" id="MKANFEW"/>
<dbReference type="OrthoDB" id="16510at2759"/>
<dbReference type="PhylomeDB" id="Q6P0F0"/>
<dbReference type="TreeFam" id="TF332611"/>
<dbReference type="PRO" id="PR:Q6P0F0"/>
<dbReference type="Proteomes" id="UP000000437">
    <property type="component" value="Alternate scaffold 5"/>
</dbReference>
<dbReference type="Proteomes" id="UP000000437">
    <property type="component" value="Chromosome 5"/>
</dbReference>
<dbReference type="Bgee" id="ENSDARG00000035282">
    <property type="expression patterns" value="Expressed in mature ovarian follicle and 28 other cell types or tissues"/>
</dbReference>
<dbReference type="GO" id="GO:0072546">
    <property type="term" value="C:EMC complex"/>
    <property type="evidence" value="ECO:0000250"/>
    <property type="project" value="UniProtKB"/>
</dbReference>
<dbReference type="GO" id="GO:0005789">
    <property type="term" value="C:endoplasmic reticulum membrane"/>
    <property type="evidence" value="ECO:0000250"/>
    <property type="project" value="UniProtKB"/>
</dbReference>
<dbReference type="GO" id="GO:0016020">
    <property type="term" value="C:membrane"/>
    <property type="evidence" value="ECO:0000250"/>
    <property type="project" value="UniProtKB"/>
</dbReference>
<dbReference type="GO" id="GO:0000045">
    <property type="term" value="P:autophagosome assembly"/>
    <property type="evidence" value="ECO:0000318"/>
    <property type="project" value="GO_Central"/>
</dbReference>
<dbReference type="GO" id="GO:0045050">
    <property type="term" value="P:protein insertion into ER membrane by stop-transfer membrane-anchor sequence"/>
    <property type="evidence" value="ECO:0000250"/>
    <property type="project" value="UniProtKB"/>
</dbReference>
<dbReference type="GO" id="GO:0071816">
    <property type="term" value="P:tail-anchored membrane protein insertion into ER membrane"/>
    <property type="evidence" value="ECO:0000250"/>
    <property type="project" value="UniProtKB"/>
</dbReference>
<dbReference type="InterPro" id="IPR008504">
    <property type="entry name" value="Emc6"/>
</dbReference>
<dbReference type="InterPro" id="IPR029008">
    <property type="entry name" value="EMC6-like"/>
</dbReference>
<dbReference type="PANTHER" id="PTHR20994">
    <property type="entry name" value="ER MEMBRANE PROTEIN COMPLEX SUBUNIT 6"/>
    <property type="match status" value="1"/>
</dbReference>
<dbReference type="PANTHER" id="PTHR20994:SF0">
    <property type="entry name" value="ER MEMBRANE PROTEIN COMPLEX SUBUNIT 6"/>
    <property type="match status" value="1"/>
</dbReference>
<dbReference type="Pfam" id="PF07019">
    <property type="entry name" value="EMC6"/>
    <property type="match status" value="1"/>
</dbReference>
<proteinExistence type="inferred from homology"/>
<gene>
    <name type="primary">emc6</name>
    <name type="synonym">tmem93</name>
    <name type="ORF">zgc:77320</name>
</gene>
<organism>
    <name type="scientific">Danio rerio</name>
    <name type="common">Zebrafish</name>
    <name type="synonym">Brachydanio rerio</name>
    <dbReference type="NCBI Taxonomy" id="7955"/>
    <lineage>
        <taxon>Eukaryota</taxon>
        <taxon>Metazoa</taxon>
        <taxon>Chordata</taxon>
        <taxon>Craniata</taxon>
        <taxon>Vertebrata</taxon>
        <taxon>Euteleostomi</taxon>
        <taxon>Actinopterygii</taxon>
        <taxon>Neopterygii</taxon>
        <taxon>Teleostei</taxon>
        <taxon>Ostariophysi</taxon>
        <taxon>Cypriniformes</taxon>
        <taxon>Danionidae</taxon>
        <taxon>Danioninae</taxon>
        <taxon>Danio</taxon>
    </lineage>
</organism>
<reference key="1">
    <citation type="submission" date="2004-01" db="EMBL/GenBank/DDBJ databases">
        <authorList>
            <consortium name="NIH - Zebrafish Gene Collection (ZGC) project"/>
        </authorList>
    </citation>
    <scope>NUCLEOTIDE SEQUENCE [LARGE SCALE MRNA]</scope>
    <source>
        <strain>SJD</strain>
        <tissue>Embryo</tissue>
    </source>
</reference>
<feature type="chain" id="PRO_0000254158" description="ER membrane protein complex subunit 6">
    <location>
        <begin position="1"/>
        <end position="110"/>
    </location>
</feature>
<feature type="topological domain" description="Cytoplasmic" evidence="1">
    <location>
        <begin position="1"/>
        <end position="28"/>
    </location>
</feature>
<feature type="transmembrane region" description="Helical" evidence="1">
    <location>
        <begin position="29"/>
        <end position="44"/>
    </location>
</feature>
<feature type="topological domain" description="Lumenal" evidence="1">
    <location>
        <begin position="45"/>
        <end position="50"/>
    </location>
</feature>
<feature type="transmembrane region" description="Helical" evidence="1">
    <location>
        <begin position="51"/>
        <end position="71"/>
    </location>
</feature>
<feature type="topological domain" description="Cytoplasmic" evidence="1">
    <location>
        <begin position="72"/>
        <end position="89"/>
    </location>
</feature>
<feature type="transmembrane region" description="Helical" evidence="1">
    <location>
        <begin position="90"/>
        <end position="106"/>
    </location>
</feature>
<feature type="topological domain" description="Lumenal" evidence="1">
    <location>
        <begin position="107"/>
        <end position="110"/>
    </location>
</feature>
<feature type="sequence conflict" description="In Ref. 1; AAH46024." evidence="2" ref="1">
    <original>S</original>
    <variation>P</variation>
    <location>
        <position position="63"/>
    </location>
</feature>
<keyword id="KW-0256">Endoplasmic reticulum</keyword>
<keyword id="KW-0472">Membrane</keyword>
<keyword id="KW-1185">Reference proteome</keyword>
<keyword id="KW-0812">Transmembrane</keyword>
<keyword id="KW-1133">Transmembrane helix</keyword>
<sequence>MASVAAKREGPQFISEVSVRGNGAVLDYCRTSVSALSGATAGILGLTGLYGFVFYFLASFLLSLLLILKAGRRWNKCFKSRRLLFTGGLVGGLFTYVLFWTFLYGMVHVY</sequence>
<protein>
    <recommendedName>
        <fullName>ER membrane protein complex subunit 6</fullName>
    </recommendedName>
    <alternativeName>
        <fullName>Transmembrane protein 93</fullName>
    </alternativeName>
</protein>
<accession>Q6P0F0</accession>
<accession>Q7ZV31</accession>